<organism>
    <name type="scientific">Escherichia coli (strain K12)</name>
    <dbReference type="NCBI Taxonomy" id="83333"/>
    <lineage>
        <taxon>Bacteria</taxon>
        <taxon>Pseudomonadati</taxon>
        <taxon>Pseudomonadota</taxon>
        <taxon>Gammaproteobacteria</taxon>
        <taxon>Enterobacterales</taxon>
        <taxon>Enterobacteriaceae</taxon>
        <taxon>Escherichia</taxon>
    </lineage>
</organism>
<proteinExistence type="predicted"/>
<reference key="1">
    <citation type="journal article" date="1995" name="Nucleic Acids Res.">
        <title>Analysis of the Escherichia coli genome VI: DNA sequence of the region from 92.8 through 100 minutes.</title>
        <authorList>
            <person name="Burland V.D."/>
            <person name="Plunkett G. III"/>
            <person name="Sofia H.J."/>
            <person name="Daniels D.L."/>
            <person name="Blattner F.R."/>
        </authorList>
    </citation>
    <scope>NUCLEOTIDE SEQUENCE [LARGE SCALE GENOMIC DNA]</scope>
    <source>
        <strain>K12 / MG1655 / ATCC 47076</strain>
    </source>
</reference>
<reference key="2">
    <citation type="journal article" date="1997" name="Science">
        <title>The complete genome sequence of Escherichia coli K-12.</title>
        <authorList>
            <person name="Blattner F.R."/>
            <person name="Plunkett G. III"/>
            <person name="Bloch C.A."/>
            <person name="Perna N.T."/>
            <person name="Burland V."/>
            <person name="Riley M."/>
            <person name="Collado-Vides J."/>
            <person name="Glasner J.D."/>
            <person name="Rode C.K."/>
            <person name="Mayhew G.F."/>
            <person name="Gregor J."/>
            <person name="Davis N.W."/>
            <person name="Kirkpatrick H.A."/>
            <person name="Goeden M.A."/>
            <person name="Rose D.J."/>
            <person name="Mau B."/>
            <person name="Shao Y."/>
        </authorList>
    </citation>
    <scope>NUCLEOTIDE SEQUENCE [LARGE SCALE GENOMIC DNA]</scope>
    <source>
        <strain>K12 / MG1655 / ATCC 47076</strain>
    </source>
</reference>
<reference key="3">
    <citation type="journal article" date="2006" name="Mol. Syst. Biol.">
        <title>Highly accurate genome sequences of Escherichia coli K-12 strains MG1655 and W3110.</title>
        <authorList>
            <person name="Hayashi K."/>
            <person name="Morooka N."/>
            <person name="Yamamoto Y."/>
            <person name="Fujita K."/>
            <person name="Isono K."/>
            <person name="Choi S."/>
            <person name="Ohtsubo E."/>
            <person name="Baba T."/>
            <person name="Wanner B.L."/>
            <person name="Mori H."/>
            <person name="Horiuchi T."/>
        </authorList>
    </citation>
    <scope>NUCLEOTIDE SEQUENCE [LARGE SCALE GENOMIC DNA]</scope>
    <source>
        <strain>K12 / W3110 / ATCC 27325 / DSM 5911</strain>
    </source>
</reference>
<name>YJFZ_ECOLI</name>
<accession>P39308</accession>
<accession>Q2M6A1</accession>
<comment type="subcellular location">
    <subcellularLocation>
        <location evidence="2">Membrane</location>
        <topology evidence="2">Single-pass membrane protein</topology>
    </subcellularLocation>
</comment>
<comment type="similarity">
    <text evidence="2">To E.coli YjiC.</text>
</comment>
<dbReference type="EMBL" id="U14003">
    <property type="protein sequence ID" value="AAA97100.1"/>
    <property type="molecule type" value="Genomic_DNA"/>
</dbReference>
<dbReference type="EMBL" id="U00096">
    <property type="protein sequence ID" value="AAC77161.1"/>
    <property type="molecule type" value="Genomic_DNA"/>
</dbReference>
<dbReference type="EMBL" id="AP009048">
    <property type="protein sequence ID" value="BAE78205.1"/>
    <property type="molecule type" value="Genomic_DNA"/>
</dbReference>
<dbReference type="PIR" id="S56429">
    <property type="entry name" value="S56429"/>
</dbReference>
<dbReference type="RefSeq" id="NP_418625.1">
    <property type="nucleotide sequence ID" value="NC_000913.3"/>
</dbReference>
<dbReference type="RefSeq" id="WP_000174714.1">
    <property type="nucleotide sequence ID" value="NZ_LN832404.1"/>
</dbReference>
<dbReference type="BioGRID" id="4259636">
    <property type="interactions" value="9"/>
</dbReference>
<dbReference type="DIP" id="DIP-12598N"/>
<dbReference type="FunCoup" id="P39308">
    <property type="interactions" value="23"/>
</dbReference>
<dbReference type="IntAct" id="P39308">
    <property type="interactions" value="2"/>
</dbReference>
<dbReference type="STRING" id="511145.b4204"/>
<dbReference type="PaxDb" id="511145-b4204"/>
<dbReference type="EnsemblBacteria" id="AAC77161">
    <property type="protein sequence ID" value="AAC77161"/>
    <property type="gene ID" value="b4204"/>
</dbReference>
<dbReference type="GeneID" id="948719"/>
<dbReference type="KEGG" id="ecj:JW4162"/>
<dbReference type="KEGG" id="eco:b4204"/>
<dbReference type="KEGG" id="ecoc:C3026_22710"/>
<dbReference type="PATRIC" id="fig|511145.12.peg.4336"/>
<dbReference type="EchoBASE" id="EB2393"/>
<dbReference type="eggNOG" id="ENOG5033TP9">
    <property type="taxonomic scope" value="Bacteria"/>
</dbReference>
<dbReference type="HOGENOM" id="CLU_087885_0_0_6"/>
<dbReference type="InParanoid" id="P39308"/>
<dbReference type="OMA" id="ELWTQEN"/>
<dbReference type="BioCyc" id="EcoCyc:G7862-MONOMER"/>
<dbReference type="PRO" id="PR:P39308"/>
<dbReference type="Proteomes" id="UP000000625">
    <property type="component" value="Chromosome"/>
</dbReference>
<dbReference type="GO" id="GO:0016020">
    <property type="term" value="C:membrane"/>
    <property type="evidence" value="ECO:0007669"/>
    <property type="project" value="UniProtKB-SubCell"/>
</dbReference>
<dbReference type="InterPro" id="IPR021220">
    <property type="entry name" value="DUF2686"/>
</dbReference>
<dbReference type="Pfam" id="PF10887">
    <property type="entry name" value="DUF2686"/>
    <property type="match status" value="1"/>
</dbReference>
<feature type="chain" id="PRO_0000169758" description="Uncharacterized protein YjfZ">
    <location>
        <begin position="1"/>
        <end position="264"/>
    </location>
</feature>
<feature type="transmembrane region" description="Helical" evidence="1">
    <location>
        <begin position="182"/>
        <end position="198"/>
    </location>
</feature>
<keyword id="KW-0472">Membrane</keyword>
<keyword id="KW-1185">Reference proteome</keyword>
<keyword id="KW-0812">Transmembrane</keyword>
<keyword id="KW-1133">Transmembrane helix</keyword>
<evidence type="ECO:0000255" key="1"/>
<evidence type="ECO:0000305" key="2"/>
<sequence length="264" mass="29739">MTLPTTIYSFPAYLSRFSSTDKPVKLKFHQYARATLLSNRGRDHNCDGRRTVEIHKLDLSDWQAFNKLATRCNAYDGITMNGDNSFGWNHEATLDNIHAQKYNKAYAGARLTAELKYLLQDVESFEPNSKYTIHEVVLGPGYGTPDYTGQTIGYVVTLPAQMPNCWSSELPTIDLYIDQLRTVTGVSNALGFIIAALLNAYSDLPHDLKIGLRSLSSSAAIYSGLGFERVPQERDISCARMYLTPANHPDLWTQENGEWIYLRN</sequence>
<protein>
    <recommendedName>
        <fullName>Uncharacterized protein YjfZ</fullName>
    </recommendedName>
</protein>
<gene>
    <name type="primary">yjfZ</name>
    <name type="ordered locus">b4204</name>
    <name type="ordered locus">JW4162</name>
</gene>